<sequence length="414" mass="44698">MTLFCEQVPYPRLAEAFGTPLYVYSQSALTEAFEHYQTAFAALNPLVCYAVKANGNLSIIKHFASLGSGFDIVSGGELARVLAAGGDAAKTIFSGVGKSEAEIEFALNAGVKCFNMESIPEIDRIQKVAARLGKTAPVSLRINPDVDAKTHPYISTGLKANKFGIAYADALEAYHYAAQQPNLKIIGIDCHIGSQLTDLSPLVEACERILILVDALAAEGIVLEHLDLGGGVGIVYQDENVPDLGAYAQAVQKLIGTRRLKLILEPGRSLVGNAGSLLTRVEFVKYGEEKNFVMVDAAMNDLMRPALYDAYHHIEAVETKDIATLTANIVGPICETGDFLGKDRTIACEEGDLLLIRSAGAYGASMASNYNARNRAAEVLVDGNEYRLIRRRETLEQQMANELACLQAEHQNAV</sequence>
<dbReference type="EC" id="4.1.1.20" evidence="2"/>
<dbReference type="EMBL" id="AE002098">
    <property type="protein sequence ID" value="AAF42304.1"/>
    <property type="molecule type" value="Genomic_DNA"/>
</dbReference>
<dbReference type="PIR" id="A81020">
    <property type="entry name" value="A81020"/>
</dbReference>
<dbReference type="RefSeq" id="NP_274969.1">
    <property type="nucleotide sequence ID" value="NC_003112.2"/>
</dbReference>
<dbReference type="RefSeq" id="WP_002225849.1">
    <property type="nucleotide sequence ID" value="NC_003112.2"/>
</dbReference>
<dbReference type="SMR" id="Q9JXM2"/>
<dbReference type="FunCoup" id="Q9JXM2">
    <property type="interactions" value="407"/>
</dbReference>
<dbReference type="STRING" id="122586.NMB1976"/>
<dbReference type="PaxDb" id="122586-NMB1976"/>
<dbReference type="KEGG" id="nme:NMB1976"/>
<dbReference type="PATRIC" id="fig|122586.8.peg.2518"/>
<dbReference type="HOGENOM" id="CLU_026444_0_0_4"/>
<dbReference type="InParanoid" id="Q9JXM2"/>
<dbReference type="OrthoDB" id="9802241at2"/>
<dbReference type="UniPathway" id="UPA00034">
    <property type="reaction ID" value="UER00027"/>
</dbReference>
<dbReference type="Proteomes" id="UP000000425">
    <property type="component" value="Chromosome"/>
</dbReference>
<dbReference type="GO" id="GO:0008836">
    <property type="term" value="F:diaminopimelate decarboxylase activity"/>
    <property type="evidence" value="ECO:0000318"/>
    <property type="project" value="GO_Central"/>
</dbReference>
<dbReference type="GO" id="GO:0030170">
    <property type="term" value="F:pyridoxal phosphate binding"/>
    <property type="evidence" value="ECO:0007669"/>
    <property type="project" value="UniProtKB-UniRule"/>
</dbReference>
<dbReference type="GO" id="GO:0009089">
    <property type="term" value="P:lysine biosynthetic process via diaminopimelate"/>
    <property type="evidence" value="ECO:0000318"/>
    <property type="project" value="GO_Central"/>
</dbReference>
<dbReference type="CDD" id="cd06828">
    <property type="entry name" value="PLPDE_III_DapDC"/>
    <property type="match status" value="1"/>
</dbReference>
<dbReference type="FunFam" id="2.40.37.10:FF:000003">
    <property type="entry name" value="Diaminopimelate decarboxylase"/>
    <property type="match status" value="1"/>
</dbReference>
<dbReference type="FunFam" id="3.20.20.10:FF:000003">
    <property type="entry name" value="Diaminopimelate decarboxylase"/>
    <property type="match status" value="1"/>
</dbReference>
<dbReference type="Gene3D" id="3.20.20.10">
    <property type="entry name" value="Alanine racemase"/>
    <property type="match status" value="1"/>
</dbReference>
<dbReference type="Gene3D" id="2.40.37.10">
    <property type="entry name" value="Lyase, Ornithine Decarboxylase, Chain A, domain 1"/>
    <property type="match status" value="1"/>
</dbReference>
<dbReference type="HAMAP" id="MF_02120">
    <property type="entry name" value="LysA"/>
    <property type="match status" value="1"/>
</dbReference>
<dbReference type="InterPro" id="IPR009006">
    <property type="entry name" value="Ala_racemase/Decarboxylase_C"/>
</dbReference>
<dbReference type="InterPro" id="IPR002986">
    <property type="entry name" value="DAP_deCOOHase_LysA"/>
</dbReference>
<dbReference type="InterPro" id="IPR022643">
    <property type="entry name" value="De-COase2_C"/>
</dbReference>
<dbReference type="InterPro" id="IPR022657">
    <property type="entry name" value="De-COase2_CS"/>
</dbReference>
<dbReference type="InterPro" id="IPR022644">
    <property type="entry name" value="De-COase2_N"/>
</dbReference>
<dbReference type="InterPro" id="IPR000183">
    <property type="entry name" value="Orn/DAP/Arg_de-COase"/>
</dbReference>
<dbReference type="InterPro" id="IPR029066">
    <property type="entry name" value="PLP-binding_barrel"/>
</dbReference>
<dbReference type="NCBIfam" id="TIGR01048">
    <property type="entry name" value="lysA"/>
    <property type="match status" value="1"/>
</dbReference>
<dbReference type="PANTHER" id="PTHR43727">
    <property type="entry name" value="DIAMINOPIMELATE DECARBOXYLASE"/>
    <property type="match status" value="1"/>
</dbReference>
<dbReference type="PANTHER" id="PTHR43727:SF2">
    <property type="entry name" value="GROUP IV DECARBOXYLASE"/>
    <property type="match status" value="1"/>
</dbReference>
<dbReference type="Pfam" id="PF02784">
    <property type="entry name" value="Orn_Arg_deC_N"/>
    <property type="match status" value="1"/>
</dbReference>
<dbReference type="Pfam" id="PF00278">
    <property type="entry name" value="Orn_DAP_Arg_deC"/>
    <property type="match status" value="1"/>
</dbReference>
<dbReference type="PRINTS" id="PR01181">
    <property type="entry name" value="DAPDCRBXLASE"/>
</dbReference>
<dbReference type="PRINTS" id="PR01179">
    <property type="entry name" value="ODADCRBXLASE"/>
</dbReference>
<dbReference type="SUPFAM" id="SSF50621">
    <property type="entry name" value="Alanine racemase C-terminal domain-like"/>
    <property type="match status" value="1"/>
</dbReference>
<dbReference type="SUPFAM" id="SSF51419">
    <property type="entry name" value="PLP-binding barrel"/>
    <property type="match status" value="1"/>
</dbReference>
<dbReference type="PROSITE" id="PS00879">
    <property type="entry name" value="ODR_DC_2_2"/>
    <property type="match status" value="1"/>
</dbReference>
<accession>Q9JXM2</accession>
<reference key="1">
    <citation type="journal article" date="2000" name="Science">
        <title>Complete genome sequence of Neisseria meningitidis serogroup B strain MC58.</title>
        <authorList>
            <person name="Tettelin H."/>
            <person name="Saunders N.J."/>
            <person name="Heidelberg J.F."/>
            <person name="Jeffries A.C."/>
            <person name="Nelson K.E."/>
            <person name="Eisen J.A."/>
            <person name="Ketchum K.A."/>
            <person name="Hood D.W."/>
            <person name="Peden J.F."/>
            <person name="Dodson R.J."/>
            <person name="Nelson W.C."/>
            <person name="Gwinn M.L."/>
            <person name="DeBoy R.T."/>
            <person name="Peterson J.D."/>
            <person name="Hickey E.K."/>
            <person name="Haft D.H."/>
            <person name="Salzberg S.L."/>
            <person name="White O."/>
            <person name="Fleischmann R.D."/>
            <person name="Dougherty B.A."/>
            <person name="Mason T.M."/>
            <person name="Ciecko A."/>
            <person name="Parksey D.S."/>
            <person name="Blair E."/>
            <person name="Cittone H."/>
            <person name="Clark E.B."/>
            <person name="Cotton M.D."/>
            <person name="Utterback T.R."/>
            <person name="Khouri H.M."/>
            <person name="Qin H."/>
            <person name="Vamathevan J.J."/>
            <person name="Gill J."/>
            <person name="Scarlato V."/>
            <person name="Masignani V."/>
            <person name="Pizza M."/>
            <person name="Grandi G."/>
            <person name="Sun L."/>
            <person name="Smith H.O."/>
            <person name="Fraser C.M."/>
            <person name="Moxon E.R."/>
            <person name="Rappuoli R."/>
            <person name="Venter J.C."/>
        </authorList>
    </citation>
    <scope>NUCLEOTIDE SEQUENCE [LARGE SCALE GENOMIC DNA]</scope>
    <source>
        <strain>ATCC BAA-335 / MC58</strain>
    </source>
</reference>
<comment type="function">
    <text evidence="2">Specifically catalyzes the decarboxylation of meso-diaminopimelate (meso-DAP) to L-lysine.</text>
</comment>
<comment type="catalytic activity">
    <reaction evidence="2">
        <text>meso-2,6-diaminopimelate + H(+) = L-lysine + CO2</text>
        <dbReference type="Rhea" id="RHEA:15101"/>
        <dbReference type="ChEBI" id="CHEBI:15378"/>
        <dbReference type="ChEBI" id="CHEBI:16526"/>
        <dbReference type="ChEBI" id="CHEBI:32551"/>
        <dbReference type="ChEBI" id="CHEBI:57791"/>
        <dbReference type="EC" id="4.1.1.20"/>
    </reaction>
</comment>
<comment type="cofactor">
    <cofactor evidence="2">
        <name>pyridoxal 5'-phosphate</name>
        <dbReference type="ChEBI" id="CHEBI:597326"/>
    </cofactor>
</comment>
<comment type="pathway">
    <text evidence="2">Amino-acid biosynthesis; L-lysine biosynthesis via DAP pathway; L-lysine from DL-2,6-diaminopimelate: step 1/1.</text>
</comment>
<comment type="subunit">
    <text evidence="2">Homodimer.</text>
</comment>
<comment type="similarity">
    <text evidence="2">Belongs to the Orn/Lys/Arg decarboxylase class-II family. LysA subfamily.</text>
</comment>
<protein>
    <recommendedName>
        <fullName evidence="2">Diaminopimelate decarboxylase</fullName>
        <shortName evidence="2">DAP decarboxylase</shortName>
        <shortName evidence="2">DAPDC</shortName>
        <ecNumber evidence="2">4.1.1.20</ecNumber>
    </recommendedName>
</protein>
<feature type="chain" id="PRO_0000149932" description="Diaminopimelate decarboxylase">
    <location>
        <begin position="1"/>
        <end position="414"/>
    </location>
</feature>
<feature type="active site" description="Proton donor" evidence="1">
    <location>
        <position position="334"/>
    </location>
</feature>
<feature type="binding site" evidence="2">
    <location>
        <position position="231"/>
    </location>
    <ligand>
        <name>pyridoxal 5'-phosphate</name>
        <dbReference type="ChEBI" id="CHEBI:597326"/>
    </ligand>
</feature>
<feature type="binding site" evidence="2">
    <location>
        <begin position="265"/>
        <end position="268"/>
    </location>
    <ligand>
        <name>pyridoxal 5'-phosphate</name>
        <dbReference type="ChEBI" id="CHEBI:597326"/>
    </ligand>
</feature>
<feature type="binding site" evidence="2">
    <location>
        <position position="268"/>
    </location>
    <ligand>
        <name>substrate</name>
    </ligand>
</feature>
<feature type="binding site" evidence="2">
    <location>
        <position position="304"/>
    </location>
    <ligand>
        <name>substrate</name>
    </ligand>
</feature>
<feature type="binding site" evidence="2">
    <location>
        <position position="308"/>
    </location>
    <ligand>
        <name>substrate</name>
    </ligand>
</feature>
<feature type="binding site" evidence="2">
    <location>
        <position position="335"/>
    </location>
    <ligand>
        <name>substrate</name>
    </ligand>
</feature>
<feature type="binding site" evidence="2">
    <location>
        <position position="362"/>
    </location>
    <ligand>
        <name>pyridoxal 5'-phosphate</name>
        <dbReference type="ChEBI" id="CHEBI:597326"/>
    </ligand>
</feature>
<feature type="binding site" evidence="2">
    <location>
        <position position="362"/>
    </location>
    <ligand>
        <name>substrate</name>
    </ligand>
</feature>
<feature type="modified residue" description="N6-(pyridoxal phosphate)lysine" evidence="2">
    <location>
        <position position="52"/>
    </location>
</feature>
<name>DCDA_NEIMB</name>
<gene>
    <name evidence="2" type="primary">lysA</name>
    <name type="ordered locus">NMB1976</name>
</gene>
<proteinExistence type="inferred from homology"/>
<keyword id="KW-0028">Amino-acid biosynthesis</keyword>
<keyword id="KW-0210">Decarboxylase</keyword>
<keyword id="KW-0456">Lyase</keyword>
<keyword id="KW-0457">Lysine biosynthesis</keyword>
<keyword id="KW-0663">Pyridoxal phosphate</keyword>
<keyword id="KW-1185">Reference proteome</keyword>
<organism>
    <name type="scientific">Neisseria meningitidis serogroup B (strain ATCC BAA-335 / MC58)</name>
    <dbReference type="NCBI Taxonomy" id="122586"/>
    <lineage>
        <taxon>Bacteria</taxon>
        <taxon>Pseudomonadati</taxon>
        <taxon>Pseudomonadota</taxon>
        <taxon>Betaproteobacteria</taxon>
        <taxon>Neisseriales</taxon>
        <taxon>Neisseriaceae</taxon>
        <taxon>Neisseria</taxon>
    </lineage>
</organism>
<evidence type="ECO:0000255" key="1"/>
<evidence type="ECO:0000255" key="2">
    <source>
        <dbReference type="HAMAP-Rule" id="MF_02120"/>
    </source>
</evidence>